<comment type="function">
    <text evidence="1">Nucleotidase that shows phosphatase activity on nucleoside 5'-monophosphates.</text>
</comment>
<comment type="catalytic activity">
    <reaction evidence="1">
        <text>a ribonucleoside 5'-phosphate + H2O = a ribonucleoside + phosphate</text>
        <dbReference type="Rhea" id="RHEA:12484"/>
        <dbReference type="ChEBI" id="CHEBI:15377"/>
        <dbReference type="ChEBI" id="CHEBI:18254"/>
        <dbReference type="ChEBI" id="CHEBI:43474"/>
        <dbReference type="ChEBI" id="CHEBI:58043"/>
        <dbReference type="EC" id="3.1.3.5"/>
    </reaction>
</comment>
<comment type="cofactor">
    <cofactor evidence="1">
        <name>a divalent metal cation</name>
        <dbReference type="ChEBI" id="CHEBI:60240"/>
    </cofactor>
    <text evidence="1">Binds 1 divalent metal cation per subunit.</text>
</comment>
<comment type="subcellular location">
    <subcellularLocation>
        <location evidence="1">Cytoplasm</location>
    </subcellularLocation>
</comment>
<comment type="similarity">
    <text evidence="1">Belongs to the SurE nucleotidase family.</text>
</comment>
<evidence type="ECO:0000255" key="1">
    <source>
        <dbReference type="HAMAP-Rule" id="MF_00060"/>
    </source>
</evidence>
<organism>
    <name type="scientific">Helicobacter pylori (strain Shi470)</name>
    <dbReference type="NCBI Taxonomy" id="512562"/>
    <lineage>
        <taxon>Bacteria</taxon>
        <taxon>Pseudomonadati</taxon>
        <taxon>Campylobacterota</taxon>
        <taxon>Epsilonproteobacteria</taxon>
        <taxon>Campylobacterales</taxon>
        <taxon>Helicobacteraceae</taxon>
        <taxon>Helicobacter</taxon>
    </lineage>
</organism>
<name>SURE_HELPS</name>
<feature type="chain" id="PRO_1000092010" description="5'-nucleotidase SurE">
    <location>
        <begin position="1"/>
        <end position="267"/>
    </location>
</feature>
<feature type="binding site" evidence="1">
    <location>
        <position position="9"/>
    </location>
    <ligand>
        <name>a divalent metal cation</name>
        <dbReference type="ChEBI" id="CHEBI:60240"/>
    </ligand>
</feature>
<feature type="binding site" evidence="1">
    <location>
        <position position="10"/>
    </location>
    <ligand>
        <name>a divalent metal cation</name>
        <dbReference type="ChEBI" id="CHEBI:60240"/>
    </ligand>
</feature>
<feature type="binding site" evidence="1">
    <location>
        <position position="40"/>
    </location>
    <ligand>
        <name>a divalent metal cation</name>
        <dbReference type="ChEBI" id="CHEBI:60240"/>
    </ligand>
</feature>
<feature type="binding site" evidence="1">
    <location>
        <position position="97"/>
    </location>
    <ligand>
        <name>a divalent metal cation</name>
        <dbReference type="ChEBI" id="CHEBI:60240"/>
    </ligand>
</feature>
<accession>B2UU78</accession>
<keyword id="KW-0963">Cytoplasm</keyword>
<keyword id="KW-0378">Hydrolase</keyword>
<keyword id="KW-0479">Metal-binding</keyword>
<keyword id="KW-0547">Nucleotide-binding</keyword>
<dbReference type="EC" id="3.1.3.5" evidence="1"/>
<dbReference type="EMBL" id="CP001072">
    <property type="protein sequence ID" value="ACD48410.1"/>
    <property type="molecule type" value="Genomic_DNA"/>
</dbReference>
<dbReference type="RefSeq" id="WP_000722483.1">
    <property type="nucleotide sequence ID" value="NC_010698.2"/>
</dbReference>
<dbReference type="SMR" id="B2UU78"/>
<dbReference type="KEGG" id="hps:HPSH_04900"/>
<dbReference type="HOGENOM" id="CLU_045192_1_3_7"/>
<dbReference type="GO" id="GO:0005737">
    <property type="term" value="C:cytoplasm"/>
    <property type="evidence" value="ECO:0007669"/>
    <property type="project" value="UniProtKB-SubCell"/>
</dbReference>
<dbReference type="GO" id="GO:0008254">
    <property type="term" value="F:3'-nucleotidase activity"/>
    <property type="evidence" value="ECO:0007669"/>
    <property type="project" value="TreeGrafter"/>
</dbReference>
<dbReference type="GO" id="GO:0008253">
    <property type="term" value="F:5'-nucleotidase activity"/>
    <property type="evidence" value="ECO:0007669"/>
    <property type="project" value="UniProtKB-UniRule"/>
</dbReference>
<dbReference type="GO" id="GO:0004309">
    <property type="term" value="F:exopolyphosphatase activity"/>
    <property type="evidence" value="ECO:0007669"/>
    <property type="project" value="TreeGrafter"/>
</dbReference>
<dbReference type="GO" id="GO:0046872">
    <property type="term" value="F:metal ion binding"/>
    <property type="evidence" value="ECO:0007669"/>
    <property type="project" value="UniProtKB-UniRule"/>
</dbReference>
<dbReference type="GO" id="GO:0000166">
    <property type="term" value="F:nucleotide binding"/>
    <property type="evidence" value="ECO:0007669"/>
    <property type="project" value="UniProtKB-KW"/>
</dbReference>
<dbReference type="FunFam" id="3.40.1210.10:FF:000001">
    <property type="entry name" value="5'/3'-nucleotidase SurE"/>
    <property type="match status" value="1"/>
</dbReference>
<dbReference type="Gene3D" id="3.40.1210.10">
    <property type="entry name" value="Survival protein SurE-like phosphatase/nucleotidase"/>
    <property type="match status" value="1"/>
</dbReference>
<dbReference type="HAMAP" id="MF_00060">
    <property type="entry name" value="SurE"/>
    <property type="match status" value="1"/>
</dbReference>
<dbReference type="InterPro" id="IPR030048">
    <property type="entry name" value="SurE"/>
</dbReference>
<dbReference type="InterPro" id="IPR002828">
    <property type="entry name" value="SurE-like_Pase/nucleotidase"/>
</dbReference>
<dbReference type="InterPro" id="IPR036523">
    <property type="entry name" value="SurE-like_sf"/>
</dbReference>
<dbReference type="NCBIfam" id="NF001490">
    <property type="entry name" value="PRK00346.1-4"/>
    <property type="match status" value="1"/>
</dbReference>
<dbReference type="NCBIfam" id="NF001494">
    <property type="entry name" value="PRK00346.2-4"/>
    <property type="match status" value="1"/>
</dbReference>
<dbReference type="NCBIfam" id="TIGR00087">
    <property type="entry name" value="surE"/>
    <property type="match status" value="1"/>
</dbReference>
<dbReference type="PANTHER" id="PTHR30457">
    <property type="entry name" value="5'-NUCLEOTIDASE SURE"/>
    <property type="match status" value="1"/>
</dbReference>
<dbReference type="PANTHER" id="PTHR30457:SF12">
    <property type="entry name" value="5'_3'-NUCLEOTIDASE SURE"/>
    <property type="match status" value="1"/>
</dbReference>
<dbReference type="Pfam" id="PF01975">
    <property type="entry name" value="SurE"/>
    <property type="match status" value="1"/>
</dbReference>
<dbReference type="SUPFAM" id="SSF64167">
    <property type="entry name" value="SurE-like"/>
    <property type="match status" value="1"/>
</dbReference>
<sequence length="267" mass="30033">MKKILLTNDDGYHAKGIKALEQALEKMAEIYVVAPKHEKSACSQCITITAPLRAEKIKGKEGRHYKIDDGTPSDCVYLAINELFKHVCFDLVISGINLGSNMGEDTIYSGTVAGAIEGTIQGVPSIAISQILSHRNKNTPLSFDLAQKIIQDLVQNIFTNGYPLKGRKLLNVNVPNCSLQEYKGECITPKGYRLYKKEVHKRTDPKNESYFWLGLHPLEWQKRENEDRLSDFDAIASNHVSITPLNLDLTSYDDLKNLESWHKGMLK</sequence>
<proteinExistence type="inferred from homology"/>
<gene>
    <name evidence="1" type="primary">surE</name>
    <name type="ordered locus">HPSH_04900</name>
</gene>
<protein>
    <recommendedName>
        <fullName evidence="1">5'-nucleotidase SurE</fullName>
        <ecNumber evidence="1">3.1.3.5</ecNumber>
    </recommendedName>
    <alternativeName>
        <fullName evidence="1">Nucleoside 5'-monophosphate phosphohydrolase</fullName>
    </alternativeName>
</protein>
<reference key="1">
    <citation type="submission" date="2008-05" db="EMBL/GenBank/DDBJ databases">
        <title>Genome sequence of Helicobacter pylori from the remote Amazon: traces of Asian ancestry of the first Americans.</title>
        <authorList>
            <person name="Kersulyte D."/>
            <person name="Kalia A."/>
            <person name="Gilman R.H."/>
            <person name="Berg D.E."/>
        </authorList>
    </citation>
    <scope>NUCLEOTIDE SEQUENCE [LARGE SCALE GENOMIC DNA]</scope>
    <source>
        <strain>Shi470</strain>
    </source>
</reference>